<gene>
    <name evidence="1" type="primary">yidC1</name>
    <name type="ordered locus">SE_1689</name>
</gene>
<reference key="1">
    <citation type="journal article" date="2003" name="Mol. Microbiol.">
        <title>Genome-based analysis of virulence genes in a non-biofilm-forming Staphylococcus epidermidis strain (ATCC 12228).</title>
        <authorList>
            <person name="Zhang Y.-Q."/>
            <person name="Ren S.-X."/>
            <person name="Li H.-L."/>
            <person name="Wang Y.-X."/>
            <person name="Fu G."/>
            <person name="Yang J."/>
            <person name="Qin Z.-Q."/>
            <person name="Miao Y.-G."/>
            <person name="Wang W.-Y."/>
            <person name="Chen R.-S."/>
            <person name="Shen Y."/>
            <person name="Chen Z."/>
            <person name="Yuan Z.-H."/>
            <person name="Zhao G.-P."/>
            <person name="Qu D."/>
            <person name="Danchin A."/>
            <person name="Wen Y.-M."/>
        </authorList>
    </citation>
    <scope>NUCLEOTIDE SEQUENCE [LARGE SCALE GENOMIC DNA]</scope>
    <source>
        <strain>ATCC 12228 / FDA PCI 1200</strain>
    </source>
</reference>
<sequence length="290" mass="33747">MKKKALLPLFLGIMIFLAGCDYSTPEKQDGFFFNTFVQPMKHLLQWLGNDVFHNNFGLAIIVLVLFIRLILLPFMLSNYKNSHMMREKMKVAKPEVDGIQEKVKRARTQEEKMAANQELMEVYKKYDMNPMKSMLGCLPILIQMPIIMGLYFVLKDKLVNGLSEHPHFLWFNLTKPDIWITVIAGVLYFIQAVVSSKTMPQEQRQMGYMMMVISPIMIIWISLQASSALGLYWSVSALFLVIQTHFANIYYSKLAKKEVQPFIEKYEREHNPYSKKKGKNTQVVSKKNKK</sequence>
<proteinExistence type="inferred from homology"/>
<name>YIDC1_STAES</name>
<organism>
    <name type="scientific">Staphylococcus epidermidis (strain ATCC 12228 / FDA PCI 1200)</name>
    <dbReference type="NCBI Taxonomy" id="176280"/>
    <lineage>
        <taxon>Bacteria</taxon>
        <taxon>Bacillati</taxon>
        <taxon>Bacillota</taxon>
        <taxon>Bacilli</taxon>
        <taxon>Bacillales</taxon>
        <taxon>Staphylococcaceae</taxon>
        <taxon>Staphylococcus</taxon>
    </lineage>
</organism>
<dbReference type="EMBL" id="AE015929">
    <property type="protein sequence ID" value="AAO05288.1"/>
    <property type="molecule type" value="Genomic_DNA"/>
</dbReference>
<dbReference type="RefSeq" id="NP_765244.1">
    <property type="nucleotide sequence ID" value="NC_004461.1"/>
</dbReference>
<dbReference type="SMR" id="Q8CMK8"/>
<dbReference type="DNASU" id="1057314"/>
<dbReference type="KEGG" id="sep:SE_1689"/>
<dbReference type="PATRIC" id="fig|176280.10.peg.1649"/>
<dbReference type="eggNOG" id="COG0706">
    <property type="taxonomic scope" value="Bacteria"/>
</dbReference>
<dbReference type="HOGENOM" id="CLU_036138_5_2_9"/>
<dbReference type="OrthoDB" id="9780552at2"/>
<dbReference type="Proteomes" id="UP000001411">
    <property type="component" value="Chromosome"/>
</dbReference>
<dbReference type="GO" id="GO:0005886">
    <property type="term" value="C:plasma membrane"/>
    <property type="evidence" value="ECO:0007669"/>
    <property type="project" value="UniProtKB-SubCell"/>
</dbReference>
<dbReference type="GO" id="GO:0032977">
    <property type="term" value="F:membrane insertase activity"/>
    <property type="evidence" value="ECO:0007669"/>
    <property type="project" value="InterPro"/>
</dbReference>
<dbReference type="GO" id="GO:0051205">
    <property type="term" value="P:protein insertion into membrane"/>
    <property type="evidence" value="ECO:0007669"/>
    <property type="project" value="TreeGrafter"/>
</dbReference>
<dbReference type="GO" id="GO:0015031">
    <property type="term" value="P:protein transport"/>
    <property type="evidence" value="ECO:0007669"/>
    <property type="project" value="UniProtKB-KW"/>
</dbReference>
<dbReference type="CDD" id="cd20070">
    <property type="entry name" value="5TM_YidC_Alb3"/>
    <property type="match status" value="1"/>
</dbReference>
<dbReference type="HAMAP" id="MF_01811">
    <property type="entry name" value="YidC_type2"/>
    <property type="match status" value="1"/>
</dbReference>
<dbReference type="InterPro" id="IPR001708">
    <property type="entry name" value="YidC/ALB3/OXA1/COX18"/>
</dbReference>
<dbReference type="InterPro" id="IPR028055">
    <property type="entry name" value="YidC/Oxa/ALB_C"/>
</dbReference>
<dbReference type="InterPro" id="IPR023060">
    <property type="entry name" value="YidC/YidC1/YidC2_Firmicutes"/>
</dbReference>
<dbReference type="InterPro" id="IPR047196">
    <property type="entry name" value="YidC_ALB_C"/>
</dbReference>
<dbReference type="NCBIfam" id="TIGR03592">
    <property type="entry name" value="yidC_oxa1_cterm"/>
    <property type="match status" value="1"/>
</dbReference>
<dbReference type="PANTHER" id="PTHR12428:SF65">
    <property type="entry name" value="CYTOCHROME C OXIDASE ASSEMBLY PROTEIN COX18, MITOCHONDRIAL"/>
    <property type="match status" value="1"/>
</dbReference>
<dbReference type="PANTHER" id="PTHR12428">
    <property type="entry name" value="OXA1"/>
    <property type="match status" value="1"/>
</dbReference>
<dbReference type="Pfam" id="PF02096">
    <property type="entry name" value="60KD_IMP"/>
    <property type="match status" value="1"/>
</dbReference>
<dbReference type="PRINTS" id="PR00701">
    <property type="entry name" value="60KDINNERMP"/>
</dbReference>
<dbReference type="PROSITE" id="PS51257">
    <property type="entry name" value="PROKAR_LIPOPROTEIN"/>
    <property type="match status" value="1"/>
</dbReference>
<accession>Q8CMK8</accession>
<protein>
    <recommendedName>
        <fullName evidence="1">Membrane protein insertase YidC 1</fullName>
    </recommendedName>
    <alternativeName>
        <fullName evidence="1">Foldase YidC 1</fullName>
    </alternativeName>
    <alternativeName>
        <fullName evidence="1">Membrane integrase YidC 1</fullName>
    </alternativeName>
    <alternativeName>
        <fullName evidence="1">Membrane protein YidC 1</fullName>
    </alternativeName>
</protein>
<feature type="signal peptide" evidence="1">
    <location>
        <begin position="1"/>
        <end position="19"/>
    </location>
</feature>
<feature type="chain" id="PRO_0000020399" description="Membrane protein insertase YidC 1">
    <location>
        <begin position="20"/>
        <end position="290"/>
    </location>
</feature>
<feature type="transmembrane region" description="Helical" evidence="1">
    <location>
        <begin position="56"/>
        <end position="76"/>
    </location>
</feature>
<feature type="transmembrane region" description="Helical" evidence="1">
    <location>
        <begin position="134"/>
        <end position="154"/>
    </location>
</feature>
<feature type="transmembrane region" description="Helical" evidence="1">
    <location>
        <begin position="176"/>
        <end position="196"/>
    </location>
</feature>
<feature type="transmembrane region" description="Helical" evidence="1">
    <location>
        <begin position="211"/>
        <end position="231"/>
    </location>
</feature>
<feature type="transmembrane region" description="Helical" evidence="1">
    <location>
        <begin position="232"/>
        <end position="252"/>
    </location>
</feature>
<feature type="region of interest" description="Disordered" evidence="2">
    <location>
        <begin position="270"/>
        <end position="290"/>
    </location>
</feature>
<feature type="compositionally biased region" description="Polar residues" evidence="2">
    <location>
        <begin position="280"/>
        <end position="290"/>
    </location>
</feature>
<feature type="lipid moiety-binding region" description="N-palmitoyl cysteine" evidence="1">
    <location>
        <position position="20"/>
    </location>
</feature>
<feature type="lipid moiety-binding region" description="S-diacylglycerol cysteine" evidence="1">
    <location>
        <position position="20"/>
    </location>
</feature>
<evidence type="ECO:0000255" key="1">
    <source>
        <dbReference type="HAMAP-Rule" id="MF_01811"/>
    </source>
</evidence>
<evidence type="ECO:0000256" key="2">
    <source>
        <dbReference type="SAM" id="MobiDB-lite"/>
    </source>
</evidence>
<comment type="function">
    <text evidence="1">Required for the insertion and/or proper folding and/or complex formation of integral membrane proteins into the membrane. Involved in integration of membrane proteins that insert both dependently and independently of the Sec translocase complex, as well as at least some lipoproteins.</text>
</comment>
<comment type="subcellular location">
    <subcellularLocation>
        <location evidence="1">Cell membrane</location>
        <topology evidence="1">Multi-pass membrane protein</topology>
    </subcellularLocation>
</comment>
<comment type="similarity">
    <text evidence="1">Belongs to the OXA1/ALB3/YidC family. Type 2 subfamily.</text>
</comment>
<keyword id="KW-1003">Cell membrane</keyword>
<keyword id="KW-0143">Chaperone</keyword>
<keyword id="KW-0449">Lipoprotein</keyword>
<keyword id="KW-0472">Membrane</keyword>
<keyword id="KW-0564">Palmitate</keyword>
<keyword id="KW-0653">Protein transport</keyword>
<keyword id="KW-0732">Signal</keyword>
<keyword id="KW-0812">Transmembrane</keyword>
<keyword id="KW-1133">Transmembrane helix</keyword>
<keyword id="KW-0813">Transport</keyword>